<comment type="function">
    <text evidence="1 4">Actin-based motor molecule with ATPase activity that localizes to the mitochondrion outer membrane (PubMed:24825904). Motor protein that moves towards the plus-end of actin filaments (PubMed:24825904). Required for mitochondrial inheritance during mitosis (By similarity). May be involved in mitochondrial transport or positioning (By similarity).</text>
</comment>
<comment type="subunit">
    <text evidence="4">Myosin is a hexamer of 2 heavy chains and 4 light chains: interacts with myosin light chains MYL9 and MYL12B.</text>
</comment>
<comment type="subcellular location">
    <subcellularLocation>
        <location evidence="1">Mitochondrion outer membrane</location>
        <topology evidence="1">Peripheral membrane protein</topology>
    </subcellularLocation>
    <subcellularLocation>
        <location evidence="1">Cytoplasm</location>
        <location evidence="1">Cytoskeleton</location>
    </subcellularLocation>
</comment>
<comment type="alternative products">
    <event type="alternative splicing"/>
    <isoform>
        <id>Q5SV80-1</id>
        <name>1</name>
        <sequence type="displayed"/>
    </isoform>
    <isoform>
        <id>Q5SV80-2</id>
        <name>2</name>
        <sequence type="described" ref="VSP_033407 VSP_033408"/>
    </isoform>
</comment>
<comment type="domain">
    <text evidence="1">The MyMOMA (MYO19-specific mitochondrial outer membrane-association) region mediates association with the mitochondrion outer membrane via electrostatic interaction.</text>
</comment>
<comment type="similarity">
    <text evidence="7">Belongs to the TRAFAC class myosin-kinesin ATPase superfamily. Myosin family.</text>
</comment>
<accession>Q5SV80</accession>
<accession>Q8BH54</accession>
<accession>Q9D2Z3</accession>
<reference key="1">
    <citation type="journal article" date="2005" name="Science">
        <title>The transcriptional landscape of the mammalian genome.</title>
        <authorList>
            <person name="Carninci P."/>
            <person name="Kasukawa T."/>
            <person name="Katayama S."/>
            <person name="Gough J."/>
            <person name="Frith M.C."/>
            <person name="Maeda N."/>
            <person name="Oyama R."/>
            <person name="Ravasi T."/>
            <person name="Lenhard B."/>
            <person name="Wells C."/>
            <person name="Kodzius R."/>
            <person name="Shimokawa K."/>
            <person name="Bajic V.B."/>
            <person name="Brenner S.E."/>
            <person name="Batalov S."/>
            <person name="Forrest A.R."/>
            <person name="Zavolan M."/>
            <person name="Davis M.J."/>
            <person name="Wilming L.G."/>
            <person name="Aidinis V."/>
            <person name="Allen J.E."/>
            <person name="Ambesi-Impiombato A."/>
            <person name="Apweiler R."/>
            <person name="Aturaliya R.N."/>
            <person name="Bailey T.L."/>
            <person name="Bansal M."/>
            <person name="Baxter L."/>
            <person name="Beisel K.W."/>
            <person name="Bersano T."/>
            <person name="Bono H."/>
            <person name="Chalk A.M."/>
            <person name="Chiu K.P."/>
            <person name="Choudhary V."/>
            <person name="Christoffels A."/>
            <person name="Clutterbuck D.R."/>
            <person name="Crowe M.L."/>
            <person name="Dalla E."/>
            <person name="Dalrymple B.P."/>
            <person name="de Bono B."/>
            <person name="Della Gatta G."/>
            <person name="di Bernardo D."/>
            <person name="Down T."/>
            <person name="Engstrom P."/>
            <person name="Fagiolini M."/>
            <person name="Faulkner G."/>
            <person name="Fletcher C.F."/>
            <person name="Fukushima T."/>
            <person name="Furuno M."/>
            <person name="Futaki S."/>
            <person name="Gariboldi M."/>
            <person name="Georgii-Hemming P."/>
            <person name="Gingeras T.R."/>
            <person name="Gojobori T."/>
            <person name="Green R.E."/>
            <person name="Gustincich S."/>
            <person name="Harbers M."/>
            <person name="Hayashi Y."/>
            <person name="Hensch T.K."/>
            <person name="Hirokawa N."/>
            <person name="Hill D."/>
            <person name="Huminiecki L."/>
            <person name="Iacono M."/>
            <person name="Ikeo K."/>
            <person name="Iwama A."/>
            <person name="Ishikawa T."/>
            <person name="Jakt M."/>
            <person name="Kanapin A."/>
            <person name="Katoh M."/>
            <person name="Kawasawa Y."/>
            <person name="Kelso J."/>
            <person name="Kitamura H."/>
            <person name="Kitano H."/>
            <person name="Kollias G."/>
            <person name="Krishnan S.P."/>
            <person name="Kruger A."/>
            <person name="Kummerfeld S.K."/>
            <person name="Kurochkin I.V."/>
            <person name="Lareau L.F."/>
            <person name="Lazarevic D."/>
            <person name="Lipovich L."/>
            <person name="Liu J."/>
            <person name="Liuni S."/>
            <person name="McWilliam S."/>
            <person name="Madan Babu M."/>
            <person name="Madera M."/>
            <person name="Marchionni L."/>
            <person name="Matsuda H."/>
            <person name="Matsuzawa S."/>
            <person name="Miki H."/>
            <person name="Mignone F."/>
            <person name="Miyake S."/>
            <person name="Morris K."/>
            <person name="Mottagui-Tabar S."/>
            <person name="Mulder N."/>
            <person name="Nakano N."/>
            <person name="Nakauchi H."/>
            <person name="Ng P."/>
            <person name="Nilsson R."/>
            <person name="Nishiguchi S."/>
            <person name="Nishikawa S."/>
            <person name="Nori F."/>
            <person name="Ohara O."/>
            <person name="Okazaki Y."/>
            <person name="Orlando V."/>
            <person name="Pang K.C."/>
            <person name="Pavan W.J."/>
            <person name="Pavesi G."/>
            <person name="Pesole G."/>
            <person name="Petrovsky N."/>
            <person name="Piazza S."/>
            <person name="Reed J."/>
            <person name="Reid J.F."/>
            <person name="Ring B.Z."/>
            <person name="Ringwald M."/>
            <person name="Rost B."/>
            <person name="Ruan Y."/>
            <person name="Salzberg S.L."/>
            <person name="Sandelin A."/>
            <person name="Schneider C."/>
            <person name="Schoenbach C."/>
            <person name="Sekiguchi K."/>
            <person name="Semple C.A."/>
            <person name="Seno S."/>
            <person name="Sessa L."/>
            <person name="Sheng Y."/>
            <person name="Shibata Y."/>
            <person name="Shimada H."/>
            <person name="Shimada K."/>
            <person name="Silva D."/>
            <person name="Sinclair B."/>
            <person name="Sperling S."/>
            <person name="Stupka E."/>
            <person name="Sugiura K."/>
            <person name="Sultana R."/>
            <person name="Takenaka Y."/>
            <person name="Taki K."/>
            <person name="Tammoja K."/>
            <person name="Tan S.L."/>
            <person name="Tang S."/>
            <person name="Taylor M.S."/>
            <person name="Tegner J."/>
            <person name="Teichmann S.A."/>
            <person name="Ueda H.R."/>
            <person name="van Nimwegen E."/>
            <person name="Verardo R."/>
            <person name="Wei C.L."/>
            <person name="Yagi K."/>
            <person name="Yamanishi H."/>
            <person name="Zabarovsky E."/>
            <person name="Zhu S."/>
            <person name="Zimmer A."/>
            <person name="Hide W."/>
            <person name="Bult C."/>
            <person name="Grimmond S.M."/>
            <person name="Teasdale R.D."/>
            <person name="Liu E.T."/>
            <person name="Brusic V."/>
            <person name="Quackenbush J."/>
            <person name="Wahlestedt C."/>
            <person name="Mattick J.S."/>
            <person name="Hume D.A."/>
            <person name="Kai C."/>
            <person name="Sasaki D."/>
            <person name="Tomaru Y."/>
            <person name="Fukuda S."/>
            <person name="Kanamori-Katayama M."/>
            <person name="Suzuki M."/>
            <person name="Aoki J."/>
            <person name="Arakawa T."/>
            <person name="Iida J."/>
            <person name="Imamura K."/>
            <person name="Itoh M."/>
            <person name="Kato T."/>
            <person name="Kawaji H."/>
            <person name="Kawagashira N."/>
            <person name="Kawashima T."/>
            <person name="Kojima M."/>
            <person name="Kondo S."/>
            <person name="Konno H."/>
            <person name="Nakano K."/>
            <person name="Ninomiya N."/>
            <person name="Nishio T."/>
            <person name="Okada M."/>
            <person name="Plessy C."/>
            <person name="Shibata K."/>
            <person name="Shiraki T."/>
            <person name="Suzuki S."/>
            <person name="Tagami M."/>
            <person name="Waki K."/>
            <person name="Watahiki A."/>
            <person name="Okamura-Oho Y."/>
            <person name="Suzuki H."/>
            <person name="Kawai J."/>
            <person name="Hayashizaki Y."/>
        </authorList>
    </citation>
    <scope>NUCLEOTIDE SEQUENCE [LARGE SCALE MRNA] (ISOFORM 2)</scope>
    <scope>NUCLEOTIDE SEQUENCE [LARGE SCALE MRNA] OF 517-963 (ISOFORM 1)</scope>
    <source>
        <strain>C57BL/6J</strain>
        <tissue>Cecum</tissue>
        <tissue>Head</tissue>
        <tissue>Lung</tissue>
    </source>
</reference>
<reference key="2">
    <citation type="journal article" date="2009" name="PLoS Biol.">
        <title>Lineage-specific biology revealed by a finished genome assembly of the mouse.</title>
        <authorList>
            <person name="Church D.M."/>
            <person name="Goodstadt L."/>
            <person name="Hillier L.W."/>
            <person name="Zody M.C."/>
            <person name="Goldstein S."/>
            <person name="She X."/>
            <person name="Bult C.J."/>
            <person name="Agarwala R."/>
            <person name="Cherry J.L."/>
            <person name="DiCuccio M."/>
            <person name="Hlavina W."/>
            <person name="Kapustin Y."/>
            <person name="Meric P."/>
            <person name="Maglott D."/>
            <person name="Birtle Z."/>
            <person name="Marques A.C."/>
            <person name="Graves T."/>
            <person name="Zhou S."/>
            <person name="Teague B."/>
            <person name="Potamousis K."/>
            <person name="Churas C."/>
            <person name="Place M."/>
            <person name="Herschleb J."/>
            <person name="Runnheim R."/>
            <person name="Forrest D."/>
            <person name="Amos-Landgraf J."/>
            <person name="Schwartz D.C."/>
            <person name="Cheng Z."/>
            <person name="Lindblad-Toh K."/>
            <person name="Eichler E.E."/>
            <person name="Ponting C.P."/>
        </authorList>
    </citation>
    <scope>NUCLEOTIDE SEQUENCE [LARGE SCALE GENOMIC DNA]</scope>
    <source>
        <strain>C57BL/6J</strain>
    </source>
</reference>
<reference key="3">
    <citation type="journal article" date="2004" name="Genome Res.">
        <title>The status, quality, and expansion of the NIH full-length cDNA project: the Mammalian Gene Collection (MGC).</title>
        <authorList>
            <consortium name="The MGC Project Team"/>
        </authorList>
    </citation>
    <scope>NUCLEOTIDE SEQUENCE [LARGE SCALE MRNA] OF 222-963 (ISOFORM 1)</scope>
    <source>
        <strain>FVB/N</strain>
        <tissue>Mammary tumor</tissue>
    </source>
</reference>
<reference key="4">
    <citation type="journal article" date="2014" name="J. Biol. Chem.">
        <title>Mouse myosin-19 is a plus-end-directed, high-duty ratio molecular motor.</title>
        <authorList>
            <person name="Lu Z."/>
            <person name="Ma X.N."/>
            <person name="Zhang H.M."/>
            <person name="Ji H.H."/>
            <person name="Ding H."/>
            <person name="Zhang J."/>
            <person name="Luo D."/>
            <person name="Sun Y."/>
            <person name="Li X.D."/>
        </authorList>
    </citation>
    <scope>FUNCTION</scope>
    <scope>INTERACTION WITH MYL9 AND MYL12B</scope>
</reference>
<protein>
    <recommendedName>
        <fullName evidence="6">Unconventional myosin-XIX</fullName>
    </recommendedName>
    <alternativeName>
        <fullName evidence="8">Myosin head domain-containing protein 1</fullName>
    </alternativeName>
</protein>
<gene>
    <name evidence="6 8" type="primary">Myo19</name>
    <name evidence="8" type="synonym">Myohd1</name>
</gene>
<dbReference type="EMBL" id="AK018609">
    <property type="protein sequence ID" value="BAB31305.1"/>
    <property type="molecule type" value="mRNA"/>
</dbReference>
<dbReference type="EMBL" id="AK053033">
    <property type="protein sequence ID" value="BAC35243.1"/>
    <property type="molecule type" value="mRNA"/>
</dbReference>
<dbReference type="EMBL" id="AK053237">
    <property type="protein sequence ID" value="BAC35317.1"/>
    <property type="molecule type" value="mRNA"/>
</dbReference>
<dbReference type="EMBL" id="AL645623">
    <property type="status" value="NOT_ANNOTATED_CDS"/>
    <property type="molecule type" value="Genomic_DNA"/>
</dbReference>
<dbReference type="EMBL" id="BC007156">
    <property type="protein sequence ID" value="AAH07156.1"/>
    <property type="molecule type" value="mRNA"/>
</dbReference>
<dbReference type="CCDS" id="CCDS48871.1">
    <molecule id="Q5SV80-1"/>
</dbReference>
<dbReference type="RefSeq" id="NP_079690.2">
    <molecule id="Q5SV80-1"/>
    <property type="nucleotide sequence ID" value="NM_025414.4"/>
</dbReference>
<dbReference type="RefSeq" id="XP_011247475.1">
    <molecule id="Q5SV80-1"/>
    <property type="nucleotide sequence ID" value="XM_011249173.3"/>
</dbReference>
<dbReference type="SMR" id="Q5SV80"/>
<dbReference type="BioGRID" id="211288">
    <property type="interactions" value="1"/>
</dbReference>
<dbReference type="FunCoup" id="Q5SV80">
    <property type="interactions" value="800"/>
</dbReference>
<dbReference type="STRING" id="10090.ENSMUSP00000091502"/>
<dbReference type="GlyGen" id="Q5SV80">
    <property type="glycosylation" value="1 site"/>
</dbReference>
<dbReference type="iPTMnet" id="Q5SV80"/>
<dbReference type="PhosphoSitePlus" id="Q5SV80"/>
<dbReference type="PaxDb" id="10090-ENSMUSP00000091502"/>
<dbReference type="PeptideAtlas" id="Q5SV80"/>
<dbReference type="ProteomicsDB" id="286124">
    <molecule id="Q5SV80-1"/>
</dbReference>
<dbReference type="ProteomicsDB" id="286125">
    <molecule id="Q5SV80-2"/>
</dbReference>
<dbReference type="Antibodypedia" id="73086">
    <property type="antibodies" value="146 antibodies from 26 providers"/>
</dbReference>
<dbReference type="DNASU" id="66196"/>
<dbReference type="Ensembl" id="ENSMUST00000020837.7">
    <molecule id="Q5SV80-2"/>
    <property type="protein sequence ID" value="ENSMUSP00000020837.7"/>
    <property type="gene ID" value="ENSMUSG00000020527.15"/>
</dbReference>
<dbReference type="Ensembl" id="ENSMUST00000093969.11">
    <molecule id="Q5SV80-1"/>
    <property type="protein sequence ID" value="ENSMUSP00000091502.5"/>
    <property type="gene ID" value="ENSMUSG00000020527.15"/>
</dbReference>
<dbReference type="GeneID" id="66196"/>
<dbReference type="KEGG" id="mmu:66196"/>
<dbReference type="UCSC" id="uc007kra.2">
    <molecule id="Q5SV80-2"/>
    <property type="organism name" value="mouse"/>
</dbReference>
<dbReference type="UCSC" id="uc007krb.2">
    <molecule id="Q5SV80-1"/>
    <property type="organism name" value="mouse"/>
</dbReference>
<dbReference type="AGR" id="MGI:1913446"/>
<dbReference type="CTD" id="80179"/>
<dbReference type="MGI" id="MGI:1913446">
    <property type="gene designation" value="Myo19"/>
</dbReference>
<dbReference type="VEuPathDB" id="HostDB:ENSMUSG00000020527"/>
<dbReference type="eggNOG" id="KOG0160">
    <property type="taxonomic scope" value="Eukaryota"/>
</dbReference>
<dbReference type="GeneTree" id="ENSGT00940000157382"/>
<dbReference type="HOGENOM" id="CLU_000192_7_4_1"/>
<dbReference type="InParanoid" id="Q5SV80"/>
<dbReference type="OMA" id="CSLETTW"/>
<dbReference type="OrthoDB" id="6108017at2759"/>
<dbReference type="PhylomeDB" id="Q5SV80"/>
<dbReference type="TreeFam" id="TF328771"/>
<dbReference type="Reactome" id="R-MMU-9013419">
    <property type="pathway name" value="RHOT2 GTPase cycle"/>
</dbReference>
<dbReference type="Reactome" id="R-MMU-9013425">
    <property type="pathway name" value="RHOT1 GTPase cycle"/>
</dbReference>
<dbReference type="BioGRID-ORCS" id="66196">
    <property type="hits" value="4 hits in 78 CRISPR screens"/>
</dbReference>
<dbReference type="ChiTaRS" id="Myo19">
    <property type="organism name" value="mouse"/>
</dbReference>
<dbReference type="PRO" id="PR:Q5SV80"/>
<dbReference type="Proteomes" id="UP000000589">
    <property type="component" value="Chromosome 11"/>
</dbReference>
<dbReference type="RNAct" id="Q5SV80">
    <property type="molecule type" value="protein"/>
</dbReference>
<dbReference type="Bgee" id="ENSMUSG00000020527">
    <property type="expression patterns" value="Expressed in vomeronasal organ and 156 other cell types or tissues"/>
</dbReference>
<dbReference type="GO" id="GO:0005829">
    <property type="term" value="C:cytosol"/>
    <property type="evidence" value="ECO:0007669"/>
    <property type="project" value="Ensembl"/>
</dbReference>
<dbReference type="GO" id="GO:0005741">
    <property type="term" value="C:mitochondrial outer membrane"/>
    <property type="evidence" value="ECO:0000250"/>
    <property type="project" value="UniProtKB"/>
</dbReference>
<dbReference type="GO" id="GO:0005739">
    <property type="term" value="C:mitochondrion"/>
    <property type="evidence" value="ECO:0000250"/>
    <property type="project" value="UniProtKB"/>
</dbReference>
<dbReference type="GO" id="GO:0016459">
    <property type="term" value="C:myosin complex"/>
    <property type="evidence" value="ECO:0007669"/>
    <property type="project" value="UniProtKB-KW"/>
</dbReference>
<dbReference type="GO" id="GO:0003779">
    <property type="term" value="F:actin binding"/>
    <property type="evidence" value="ECO:0000250"/>
    <property type="project" value="UniProtKB"/>
</dbReference>
<dbReference type="GO" id="GO:0005524">
    <property type="term" value="F:ATP binding"/>
    <property type="evidence" value="ECO:0007669"/>
    <property type="project" value="UniProtKB-KW"/>
</dbReference>
<dbReference type="GO" id="GO:0016887">
    <property type="term" value="F:ATP hydrolysis activity"/>
    <property type="evidence" value="ECO:0000314"/>
    <property type="project" value="MGI"/>
</dbReference>
<dbReference type="GO" id="GO:0032027">
    <property type="term" value="F:myosin light chain binding"/>
    <property type="evidence" value="ECO:0000353"/>
    <property type="project" value="MGI"/>
</dbReference>
<dbReference type="GO" id="GO:0060002">
    <property type="term" value="F:plus-end directed microfilament motor activity"/>
    <property type="evidence" value="ECO:0000314"/>
    <property type="project" value="MGI"/>
</dbReference>
<dbReference type="GO" id="GO:0034642">
    <property type="term" value="P:mitochondrion migration along actin filament"/>
    <property type="evidence" value="ECO:0000266"/>
    <property type="project" value="MGI"/>
</dbReference>
<dbReference type="GO" id="GO:0160040">
    <property type="term" value="P:mitocytosis"/>
    <property type="evidence" value="ECO:0000314"/>
    <property type="project" value="MGI"/>
</dbReference>
<dbReference type="GO" id="GO:0032465">
    <property type="term" value="P:regulation of cytokinesis"/>
    <property type="evidence" value="ECO:0000250"/>
    <property type="project" value="UniProtKB"/>
</dbReference>
<dbReference type="GO" id="GO:0090140">
    <property type="term" value="P:regulation of mitochondrial fission"/>
    <property type="evidence" value="ECO:0000250"/>
    <property type="project" value="UniProtKB"/>
</dbReference>
<dbReference type="CDD" id="cd23767">
    <property type="entry name" value="IQCD"/>
    <property type="match status" value="1"/>
</dbReference>
<dbReference type="CDD" id="cd14880">
    <property type="entry name" value="MYSc_Myo19"/>
    <property type="match status" value="1"/>
</dbReference>
<dbReference type="FunFam" id="1.20.120.720:FF:000035">
    <property type="entry name" value="Unconventional myosin-XIX"/>
    <property type="match status" value="1"/>
</dbReference>
<dbReference type="FunFam" id="1.20.58.530:FF:000013">
    <property type="entry name" value="Unconventional myosin-XIX"/>
    <property type="match status" value="1"/>
</dbReference>
<dbReference type="FunFam" id="1.10.10.820:FF:000014">
    <property type="entry name" value="unconventional myosin-XIX isoform X1"/>
    <property type="match status" value="1"/>
</dbReference>
<dbReference type="Gene3D" id="1.10.10.820">
    <property type="match status" value="1"/>
</dbReference>
<dbReference type="Gene3D" id="1.20.5.190">
    <property type="match status" value="1"/>
</dbReference>
<dbReference type="Gene3D" id="1.20.58.530">
    <property type="match status" value="1"/>
</dbReference>
<dbReference type="Gene3D" id="6.20.240.20">
    <property type="match status" value="1"/>
</dbReference>
<dbReference type="Gene3D" id="3.40.850.10">
    <property type="entry name" value="Kinesin motor domain"/>
    <property type="match status" value="1"/>
</dbReference>
<dbReference type="Gene3D" id="1.20.120.720">
    <property type="entry name" value="Myosin VI head, motor domain, U50 subdomain"/>
    <property type="match status" value="1"/>
</dbReference>
<dbReference type="InterPro" id="IPR000048">
    <property type="entry name" value="IQ_motif_EF-hand-BS"/>
</dbReference>
<dbReference type="InterPro" id="IPR036961">
    <property type="entry name" value="Kinesin_motor_dom_sf"/>
</dbReference>
<dbReference type="InterPro" id="IPR001609">
    <property type="entry name" value="Myosin_head_motor_dom-like"/>
</dbReference>
<dbReference type="InterPro" id="IPR036035">
    <property type="entry name" value="MYSc_Myo19"/>
</dbReference>
<dbReference type="InterPro" id="IPR027417">
    <property type="entry name" value="P-loop_NTPase"/>
</dbReference>
<dbReference type="PANTHER" id="PTHR13140">
    <property type="entry name" value="MYOSIN"/>
    <property type="match status" value="1"/>
</dbReference>
<dbReference type="PANTHER" id="PTHR13140:SF289">
    <property type="entry name" value="UNCONVENTIONAL MYOSIN-XIX"/>
    <property type="match status" value="1"/>
</dbReference>
<dbReference type="Pfam" id="PF00612">
    <property type="entry name" value="IQ"/>
    <property type="match status" value="1"/>
</dbReference>
<dbReference type="Pfam" id="PF00063">
    <property type="entry name" value="Myosin_head"/>
    <property type="match status" value="1"/>
</dbReference>
<dbReference type="PRINTS" id="PR00193">
    <property type="entry name" value="MYOSINHEAVY"/>
</dbReference>
<dbReference type="SMART" id="SM00015">
    <property type="entry name" value="IQ"/>
    <property type="match status" value="2"/>
</dbReference>
<dbReference type="SMART" id="SM00242">
    <property type="entry name" value="MYSc"/>
    <property type="match status" value="1"/>
</dbReference>
<dbReference type="SUPFAM" id="SSF52540">
    <property type="entry name" value="P-loop containing nucleoside triphosphate hydrolases"/>
    <property type="match status" value="1"/>
</dbReference>
<dbReference type="PROSITE" id="PS50096">
    <property type="entry name" value="IQ"/>
    <property type="match status" value="1"/>
</dbReference>
<dbReference type="PROSITE" id="PS51456">
    <property type="entry name" value="MYOSIN_MOTOR"/>
    <property type="match status" value="1"/>
</dbReference>
<organism>
    <name type="scientific">Mus musculus</name>
    <name type="common">Mouse</name>
    <dbReference type="NCBI Taxonomy" id="10090"/>
    <lineage>
        <taxon>Eukaryota</taxon>
        <taxon>Metazoa</taxon>
        <taxon>Chordata</taxon>
        <taxon>Craniata</taxon>
        <taxon>Vertebrata</taxon>
        <taxon>Euteleostomi</taxon>
        <taxon>Mammalia</taxon>
        <taxon>Eutheria</taxon>
        <taxon>Euarchontoglires</taxon>
        <taxon>Glires</taxon>
        <taxon>Rodentia</taxon>
        <taxon>Myomorpha</taxon>
        <taxon>Muroidea</taxon>
        <taxon>Muridae</taxon>
        <taxon>Murinae</taxon>
        <taxon>Mus</taxon>
        <taxon>Mus</taxon>
    </lineage>
</organism>
<evidence type="ECO:0000250" key="1">
    <source>
        <dbReference type="UniProtKB" id="Q96H55"/>
    </source>
</evidence>
<evidence type="ECO:0000255" key="2">
    <source>
        <dbReference type="PROSITE-ProRule" id="PRU00116"/>
    </source>
</evidence>
<evidence type="ECO:0000255" key="3">
    <source>
        <dbReference type="PROSITE-ProRule" id="PRU00782"/>
    </source>
</evidence>
<evidence type="ECO:0000269" key="4">
    <source>
    </source>
</evidence>
<evidence type="ECO:0000303" key="5">
    <source>
    </source>
</evidence>
<evidence type="ECO:0000303" key="6">
    <source>
    </source>
</evidence>
<evidence type="ECO:0000305" key="7"/>
<evidence type="ECO:0000312" key="8">
    <source>
        <dbReference type="MGI" id="MGI:1913446"/>
    </source>
</evidence>
<feature type="chain" id="PRO_0000332970" description="Unconventional myosin-XIX">
    <location>
        <begin position="1"/>
        <end position="963"/>
    </location>
</feature>
<feature type="domain" description="Myosin motor" evidence="3">
    <location>
        <begin position="35"/>
        <end position="758"/>
    </location>
</feature>
<feature type="domain" description="IQ 1" evidence="2">
    <location>
        <begin position="762"/>
        <end position="782"/>
    </location>
</feature>
<feature type="domain" description="IQ 2" evidence="2">
    <location>
        <begin position="783"/>
        <end position="812"/>
    </location>
</feature>
<feature type="region of interest" description="Actin-binding" evidence="3">
    <location>
        <begin position="602"/>
        <end position="624"/>
    </location>
</feature>
<feature type="region of interest" description="MyMOMA region" evidence="1">
    <location>
        <begin position="829"/>
        <end position="963"/>
    </location>
</feature>
<feature type="binding site" evidence="3">
    <location>
        <begin position="132"/>
        <end position="139"/>
    </location>
    <ligand>
        <name>ATP</name>
        <dbReference type="ChEBI" id="CHEBI:30616"/>
    </ligand>
</feature>
<feature type="splice variant" id="VSP_033407" description="In isoform 2." evidence="5">
    <original>NACTLRNSNSSRFGKFIQLQLNR</original>
    <variation>KLSVLALPSGAISSATRPPLPRC</variation>
    <location>
        <begin position="184"/>
        <end position="206"/>
    </location>
</feature>
<feature type="splice variant" id="VSP_033408" description="In isoform 2." evidence="5">
    <location>
        <begin position="207"/>
        <end position="963"/>
    </location>
</feature>
<feature type="sequence conflict" description="In Ref. 3; AAH07156." evidence="7" ref="3">
    <location>
        <position position="371"/>
    </location>
</feature>
<feature type="sequence conflict" description="In Ref. 1; BAB31305." evidence="7" ref="1">
    <original>G</original>
    <variation>C</variation>
    <location>
        <position position="517"/>
    </location>
</feature>
<feature type="sequence conflict" description="In Ref. 1; BAB31305." evidence="7" ref="1">
    <original>V</original>
    <variation>L</variation>
    <location>
        <position position="544"/>
    </location>
</feature>
<name>MYO19_MOUSE</name>
<sequence length="963" mass="108075">MLQQVNGHSLGSDAEGRASLKGDLREFLGGEIPLHQLDDLTKVNPVTLETVLRCLQARYTEDIFYTNAGCTLVALNPFKHVPQLYAPELMQEYHAAPQPQKLKPHIFTVGEQTYRNVKSLIEPVNQSIVVSGESGAGKTWTSRCLMKFYAVVAASPTSCENHKIAERIEQRILNSNPVMEAFGNACTLRNSNSSRFGKFIQLQLNRAQQMTGAAVQTYLLEKTRVACQASSERNFHIFYQICKGATKDERLQWHLPEGTAFSWLPNPESSLEEDCFEVTREAMLHLGIDTPTQNNIFKVLAGLLHLGNVHFVDSEDEALPCQVMDDTKVSVRTSALLLQLPEKMLLESMQIRTIKAGKQQQVFQKPCSRAECDTRRDCLAKLIYARLFDWLVSVINSSICADSKSWTAFIGLLDVYGFESFPNNSLEQLCINYANEKLQQHFVAHYLRAQQEEYEVEGLEWSFVNYQDNQTCLDLLEGSPISICSLINEECRLNRPSSAAQLQTRIESTLAGRPCLGHNKLSREPSFVVVHFAGPVRYHTAGLVEKNKDPVPPELTELLQQSQDPLLTMLFPANPEEKTQEELSGQSRAPALTVVSKFKASLEQLLQVLHNTTPHYIRCIKPNSQSQPQTFLQEEVLNQLEACGLVETIHISAAGFPIRVSHQNFIERYKLLRRLGPRMSSGLGGLEPAEGSSEQPLCAKEATLQPLLQDILHALPALIQTAATPSDPAKNTQIPLYCGRTKIFMTDSMLELLECGRAQMLEQCARCIQCGWRRHRLQKQEKQRRAAVLIQAAFRSWLTRKHIRRLHIAATVIKHAWHKWRIRMACLASKELDGMEEKPMPQAPGTLRSSMSPAHTRFLGAIIHLWPLGLVLANSADGVRGFQRKLVAHACLRLPSDRPSNKVQTPQQDQAGITSIRALPQGSIKFHCRKSPLQYADICPDPSASCVTGFNQILLESHRPVQV</sequence>
<proteinExistence type="evidence at protein level"/>
<keyword id="KW-0009">Actin-binding</keyword>
<keyword id="KW-0025">Alternative splicing</keyword>
<keyword id="KW-0067">ATP-binding</keyword>
<keyword id="KW-0963">Cytoplasm</keyword>
<keyword id="KW-0206">Cytoskeleton</keyword>
<keyword id="KW-0472">Membrane</keyword>
<keyword id="KW-0496">Mitochondrion</keyword>
<keyword id="KW-1000">Mitochondrion outer membrane</keyword>
<keyword id="KW-0505">Motor protein</keyword>
<keyword id="KW-0518">Myosin</keyword>
<keyword id="KW-0547">Nucleotide-binding</keyword>
<keyword id="KW-1185">Reference proteome</keyword>
<keyword id="KW-0677">Repeat</keyword>